<accession>Q8RIF7</accession>
<proteinExistence type="inferred from homology"/>
<protein>
    <recommendedName>
        <fullName evidence="1">Large ribosomal subunit protein uL23</fullName>
    </recommendedName>
    <alternativeName>
        <fullName evidence="2">50S ribosomal protein L23</fullName>
    </alternativeName>
</protein>
<name>RL23_FUSNN</name>
<feature type="chain" id="PRO_1000068081" description="Large ribosomal subunit protein uL23">
    <location>
        <begin position="1"/>
        <end position="95"/>
    </location>
</feature>
<comment type="function">
    <text evidence="1">One of the early assembly proteins it binds 23S rRNA. One of the proteins that surrounds the polypeptide exit tunnel on the outside of the ribosome. Forms the main docking site for trigger factor binding to the ribosome.</text>
</comment>
<comment type="subunit">
    <text evidence="1">Part of the 50S ribosomal subunit. Contacts protein L29, and trigger factor when it is bound to the ribosome.</text>
</comment>
<comment type="similarity">
    <text evidence="1">Belongs to the universal ribosomal protein uL23 family.</text>
</comment>
<reference key="1">
    <citation type="journal article" date="2002" name="J. Bacteriol.">
        <title>Genome sequence and analysis of the oral bacterium Fusobacterium nucleatum strain ATCC 25586.</title>
        <authorList>
            <person name="Kapatral V."/>
            <person name="Anderson I."/>
            <person name="Ivanova N."/>
            <person name="Reznik G."/>
            <person name="Los T."/>
            <person name="Lykidis A."/>
            <person name="Bhattacharyya A."/>
            <person name="Bartman A."/>
            <person name="Gardner W."/>
            <person name="Grechkin G."/>
            <person name="Zhu L."/>
            <person name="Vasieva O."/>
            <person name="Chu L."/>
            <person name="Kogan Y."/>
            <person name="Chaga O."/>
            <person name="Goltsman E."/>
            <person name="Bernal A."/>
            <person name="Larsen N."/>
            <person name="D'Souza M."/>
            <person name="Walunas T."/>
            <person name="Pusch G."/>
            <person name="Haselkorn R."/>
            <person name="Fonstein M."/>
            <person name="Kyrpides N.C."/>
            <person name="Overbeek R."/>
        </authorList>
    </citation>
    <scope>NUCLEOTIDE SEQUENCE [LARGE SCALE GENOMIC DNA]</scope>
    <source>
        <strain>ATCC 25586 / DSM 15643 / BCRC 10681 / CIP 101130 / JCM 8532 / KCTC 2640 / LMG 13131 / VPI 4355</strain>
    </source>
</reference>
<dbReference type="EMBL" id="AE009951">
    <property type="protein sequence ID" value="AAL93758.1"/>
    <property type="molecule type" value="Genomic_DNA"/>
</dbReference>
<dbReference type="RefSeq" id="NP_602459.1">
    <property type="nucleotide sequence ID" value="NC_003454.1"/>
</dbReference>
<dbReference type="RefSeq" id="WP_011015719.1">
    <property type="nucleotide sequence ID" value="NZ_OZ209243.1"/>
</dbReference>
<dbReference type="SMR" id="Q8RIF7"/>
<dbReference type="FunCoup" id="Q8RIF7">
    <property type="interactions" value="299"/>
</dbReference>
<dbReference type="STRING" id="190304.FN1643"/>
<dbReference type="PaxDb" id="190304-FN1643"/>
<dbReference type="EnsemblBacteria" id="AAL93758">
    <property type="protein sequence ID" value="AAL93758"/>
    <property type="gene ID" value="FN1643"/>
</dbReference>
<dbReference type="GeneID" id="79782581"/>
<dbReference type="KEGG" id="fnu:FN1643"/>
<dbReference type="PATRIC" id="fig|190304.8.peg.136"/>
<dbReference type="eggNOG" id="COG0089">
    <property type="taxonomic scope" value="Bacteria"/>
</dbReference>
<dbReference type="HOGENOM" id="CLU_037562_3_2_0"/>
<dbReference type="InParanoid" id="Q8RIF7"/>
<dbReference type="BioCyc" id="FNUC190304:G1FZS-146-MONOMER"/>
<dbReference type="Proteomes" id="UP000002521">
    <property type="component" value="Chromosome"/>
</dbReference>
<dbReference type="GO" id="GO:0022625">
    <property type="term" value="C:cytosolic large ribosomal subunit"/>
    <property type="evidence" value="ECO:0000318"/>
    <property type="project" value="GO_Central"/>
</dbReference>
<dbReference type="GO" id="GO:0019843">
    <property type="term" value="F:rRNA binding"/>
    <property type="evidence" value="ECO:0007669"/>
    <property type="project" value="UniProtKB-UniRule"/>
</dbReference>
<dbReference type="GO" id="GO:0003735">
    <property type="term" value="F:structural constituent of ribosome"/>
    <property type="evidence" value="ECO:0000318"/>
    <property type="project" value="GO_Central"/>
</dbReference>
<dbReference type="GO" id="GO:0006412">
    <property type="term" value="P:translation"/>
    <property type="evidence" value="ECO:0007669"/>
    <property type="project" value="UniProtKB-UniRule"/>
</dbReference>
<dbReference type="FunFam" id="3.30.70.330:FF:000001">
    <property type="entry name" value="50S ribosomal protein L23"/>
    <property type="match status" value="1"/>
</dbReference>
<dbReference type="Gene3D" id="3.30.70.330">
    <property type="match status" value="1"/>
</dbReference>
<dbReference type="HAMAP" id="MF_01369_B">
    <property type="entry name" value="Ribosomal_uL23_B"/>
    <property type="match status" value="1"/>
</dbReference>
<dbReference type="InterPro" id="IPR012677">
    <property type="entry name" value="Nucleotide-bd_a/b_plait_sf"/>
</dbReference>
<dbReference type="InterPro" id="IPR013025">
    <property type="entry name" value="Ribosomal_uL23-like"/>
</dbReference>
<dbReference type="InterPro" id="IPR012678">
    <property type="entry name" value="Ribosomal_uL23/eL15/eS24_sf"/>
</dbReference>
<dbReference type="NCBIfam" id="NF004363">
    <property type="entry name" value="PRK05738.2-4"/>
    <property type="match status" value="1"/>
</dbReference>
<dbReference type="PANTHER" id="PTHR11620">
    <property type="entry name" value="60S RIBOSOMAL PROTEIN L23A"/>
    <property type="match status" value="1"/>
</dbReference>
<dbReference type="Pfam" id="PF00276">
    <property type="entry name" value="Ribosomal_L23"/>
    <property type="match status" value="1"/>
</dbReference>
<dbReference type="SUPFAM" id="SSF54189">
    <property type="entry name" value="Ribosomal proteins S24e, L23 and L15e"/>
    <property type="match status" value="1"/>
</dbReference>
<organism>
    <name type="scientific">Fusobacterium nucleatum subsp. nucleatum (strain ATCC 25586 / DSM 15643 / BCRC 10681 / CIP 101130 / JCM 8532 / KCTC 2640 / LMG 13131 / VPI 4355)</name>
    <dbReference type="NCBI Taxonomy" id="190304"/>
    <lineage>
        <taxon>Bacteria</taxon>
        <taxon>Fusobacteriati</taxon>
        <taxon>Fusobacteriota</taxon>
        <taxon>Fusobacteriia</taxon>
        <taxon>Fusobacteriales</taxon>
        <taxon>Fusobacteriaceae</taxon>
        <taxon>Fusobacterium</taxon>
    </lineage>
</organism>
<sequence length="95" mass="11106">MNVYDIIKKPVVTEKTELLRKEYNKYTFEVHPKANKIEIKKAVEAIFNVKVEDVATINKKPITKRHGMRLYKTQAKKKAIVKLAKENTITYSKEV</sequence>
<keyword id="KW-1185">Reference proteome</keyword>
<keyword id="KW-0687">Ribonucleoprotein</keyword>
<keyword id="KW-0689">Ribosomal protein</keyword>
<keyword id="KW-0694">RNA-binding</keyword>
<keyword id="KW-0699">rRNA-binding</keyword>
<gene>
    <name evidence="1" type="primary">rplW</name>
    <name type="ordered locus">FN1643</name>
</gene>
<evidence type="ECO:0000255" key="1">
    <source>
        <dbReference type="HAMAP-Rule" id="MF_01369"/>
    </source>
</evidence>
<evidence type="ECO:0000305" key="2"/>